<gene>
    <name type="primary">Il17f</name>
</gene>
<name>IL17F_MOUSE</name>
<reference key="1">
    <citation type="submission" date="2003-08" db="EMBL/GenBank/DDBJ databases">
        <title>Expression of IL-17F like cytokine in a mouse model of asthma.</title>
        <authorList>
            <person name="Kawaguchi M."/>
            <person name="Kokubu F."/>
            <person name="Suzuki S."/>
            <person name="Watanabe S."/>
            <person name="Ieki K."/>
            <person name="Matsukura S."/>
            <person name="Kurokawa M."/>
            <person name="Adachi M."/>
        </authorList>
    </citation>
    <scope>NUCLEOTIDE SEQUENCE [MRNA] (ISOFORM 1)</scope>
</reference>
<reference key="2">
    <citation type="journal article" date="2005" name="Am. J. Respir. Crit. Care Med.">
        <title>Interleukin-17F induces pulmonary neutrophilia and amplifies antigen-induced allergic response.</title>
        <authorList>
            <person name="Oda N."/>
            <person name="Canelos P.B."/>
            <person name="Essayan D.M."/>
            <person name="Plunkett B.A."/>
            <person name="Myers A.C."/>
            <person name="Huang S.K."/>
        </authorList>
    </citation>
    <scope>NUCLEOTIDE SEQUENCE [MRNA] (ISOFORM 1)</scope>
    <scope>FUNCTION</scope>
</reference>
<reference key="3">
    <citation type="submission" date="2001-12" db="EMBL/GenBank/DDBJ databases">
        <authorList>
            <person name="Gilbert J.M."/>
            <person name="Gorman D.M."/>
        </authorList>
    </citation>
    <scope>NUCLEOTIDE SEQUENCE [MRNA] (ISOFORM 2)</scope>
</reference>
<reference key="4">
    <citation type="journal article" date="2006" name="Cell">
        <title>The orphan nuclear receptor RORgammat directs the differentiation program of proinflammatory IL-17+ T helper cells.</title>
        <authorList>
            <person name="Ivanov I.I."/>
            <person name="McKenzie B.S."/>
            <person name="Zhou L."/>
            <person name="Tadokoro C.E."/>
            <person name="Lepelley A."/>
            <person name="Lafaille J.J."/>
            <person name="Cua D.J."/>
            <person name="Littman D.R."/>
        </authorList>
    </citation>
    <scope>INDUCTION BY IL6 AND TGFB1</scope>
    <scope>TISSUE SPECIFICITY</scope>
</reference>
<reference key="5">
    <citation type="journal article" date="2007" name="J. Immunol.">
        <title>Identification of the IL-17 receptor related molecule IL-17RC as the receptor for IL-17F.</title>
        <authorList>
            <person name="Kuestner R.E."/>
            <person name="Taft D.W."/>
            <person name="Haran A."/>
            <person name="Brandt C.S."/>
            <person name="Brender T."/>
            <person name="Lum K."/>
            <person name="Harder B."/>
            <person name="Okada S."/>
            <person name="Ostrander C.D."/>
            <person name="Kreindler J.L."/>
            <person name="Aujla S.J."/>
            <person name="Reardon B."/>
            <person name="Moore M."/>
            <person name="Shea P."/>
            <person name="Schreckhise R."/>
            <person name="Bukowski T.R."/>
            <person name="Presnell S."/>
            <person name="Guerra-Lewis P."/>
            <person name="Parrish-Novak J."/>
            <person name="Ellsworth J.L."/>
            <person name="Jaspers S."/>
            <person name="Lewis K.E."/>
            <person name="Appleby M."/>
            <person name="Kolls J.K."/>
            <person name="Rixon M."/>
            <person name="West J.W."/>
            <person name="Gao Z."/>
            <person name="Levin S.D."/>
        </authorList>
    </citation>
    <scope>FUNCTION</scope>
</reference>
<reference key="6">
    <citation type="journal article" date="2007" name="J. Immunol.">
        <title>An IL-17F/A heterodimer protein is produced by mouse Th17 cells and induces airway neutrophil recruitment.</title>
        <authorList>
            <person name="Liang S.C."/>
            <person name="Long A.J."/>
            <person name="Bennett F."/>
            <person name="Whitters M.J."/>
            <person name="Karim R."/>
            <person name="Collins M."/>
            <person name="Goldman S.J."/>
            <person name="Dunussi-Joannopoulos K."/>
            <person name="Williams C.M."/>
            <person name="Wright J.F."/>
            <person name="Fouser L.A."/>
        </authorList>
    </citation>
    <scope>FUNCTION</scope>
    <scope>SUBUNIT</scope>
    <scope>SUBCELLULAR LOCATION</scope>
    <scope>TISSUE SPECIFICITY</scope>
    <scope>INDUCTION</scope>
</reference>
<reference key="7">
    <citation type="journal article" date="2009" name="Immunity">
        <title>Differential roles of interleukin-17A and -17F in host defense against mucoepithelial bacterial infection and allergic responses.</title>
        <authorList>
            <person name="Ishigame H."/>
            <person name="Kakuta S."/>
            <person name="Nagai T."/>
            <person name="Kadoki M."/>
            <person name="Nambu A."/>
            <person name="Komiyama Y."/>
            <person name="Fujikado N."/>
            <person name="Tanahashi Y."/>
            <person name="Akitsu A."/>
            <person name="Kotaki H."/>
            <person name="Sudo K."/>
            <person name="Nakae S."/>
            <person name="Sasakawa C."/>
            <person name="Iwakura Y."/>
        </authorList>
    </citation>
    <scope>FUNCTION</scope>
    <scope>DISRUPTION PHENOTYPE</scope>
    <scope>TISSUE SPECIFICITY</scope>
</reference>
<reference key="8">
    <citation type="journal article" date="2013" name="J. Immunol.">
        <title>IL-17-secreting innate lymphoid cells are essential for host defense against fungal infection.</title>
        <authorList>
            <person name="Gladiator A."/>
            <person name="Wangler N."/>
            <person name="Trautwein-Weidner K."/>
            <person name="LeibundGut-Landmann S."/>
        </authorList>
    </citation>
    <scope>FUNCTION</scope>
    <scope>TISSUE SPECIFICITY</scope>
    <scope>INDUCTION</scope>
</reference>
<reference key="9">
    <citation type="journal article" date="2017" name="Cell Rep.">
        <title>The IL-17F/IL-17RC Axis Promotes Respiratory Allergy in the Proximal Airways.</title>
        <authorList>
            <person name="De Luca A."/>
            <person name="Pariano M."/>
            <person name="Cellini B."/>
            <person name="Costantini C."/>
            <person name="Villella V.R."/>
            <person name="Jose S.S."/>
            <person name="Palmieri M."/>
            <person name="Borghi M."/>
            <person name="Galosi C."/>
            <person name="Paolicelli G."/>
            <person name="Maiuri L."/>
            <person name="Fric J."/>
            <person name="Zelante T."/>
        </authorList>
    </citation>
    <scope>FUNCTION</scope>
    <scope>DISRUPTION PHENOTYPE</scope>
    <scope>INDUCTION</scope>
</reference>
<reference key="10">
    <citation type="journal article" date="2018" name="Nat. Immunol.">
        <title>Suppression of IL-17F, but not of IL-17A, provides protection against colitis by inducing Treg cells through modification of the intestinal microbiota.</title>
        <authorList>
            <person name="Tang C."/>
            <person name="Kakuta S."/>
            <person name="Shimizu K."/>
            <person name="Kadoki M."/>
            <person name="Kamiya T."/>
            <person name="Shimazu T."/>
            <person name="Kubo S."/>
            <person name="Saijo S."/>
            <person name="Ishigame H."/>
            <person name="Nakae S."/>
            <person name="Iwakura Y."/>
        </authorList>
    </citation>
    <scope>FUNCTION</scope>
    <scope>DISRUPTION PHENOTYPE</scope>
    <scope>TISSUE SPECIFICITY</scope>
</reference>
<reference key="11">
    <citation type="journal article" date="2020" name="Nature">
        <title>gammadelta T cells and adipocyte IL-17RC control fat innervation and thermogenesis.</title>
        <authorList>
            <person name="Hu B."/>
            <person name="Jin C."/>
            <person name="Zeng X."/>
            <person name="Resch J.M."/>
            <person name="Jedrychowski M.P."/>
            <person name="Yang Z."/>
            <person name="Desai B.N."/>
            <person name="Banks A.S."/>
            <person name="Lowell B.B."/>
            <person name="Mathis D."/>
            <person name="Spiegelman B.M."/>
        </authorList>
    </citation>
    <scope>FUNCTION</scope>
    <scope>INDUCTION BY COLD</scope>
</reference>
<keyword id="KW-1064">Adaptive immunity</keyword>
<keyword id="KW-0025">Alternative splicing</keyword>
<keyword id="KW-0202">Cytokine</keyword>
<keyword id="KW-1015">Disulfide bond</keyword>
<keyword id="KW-0325">Glycoprotein</keyword>
<keyword id="KW-0391">Immunity</keyword>
<keyword id="KW-0395">Inflammatory response</keyword>
<keyword id="KW-0399">Innate immunity</keyword>
<keyword id="KW-1185">Reference proteome</keyword>
<keyword id="KW-0964">Secreted</keyword>
<keyword id="KW-0732">Signal</keyword>
<protein>
    <recommendedName>
        <fullName>Interleukin-17F</fullName>
        <shortName>IL-17F</shortName>
    </recommendedName>
</protein>
<organism>
    <name type="scientific">Mus musculus</name>
    <name type="common">Mouse</name>
    <dbReference type="NCBI Taxonomy" id="10090"/>
    <lineage>
        <taxon>Eukaryota</taxon>
        <taxon>Metazoa</taxon>
        <taxon>Chordata</taxon>
        <taxon>Craniata</taxon>
        <taxon>Vertebrata</taxon>
        <taxon>Euteleostomi</taxon>
        <taxon>Mammalia</taxon>
        <taxon>Eutheria</taxon>
        <taxon>Euarchontoglires</taxon>
        <taxon>Glires</taxon>
        <taxon>Rodentia</taxon>
        <taxon>Myomorpha</taxon>
        <taxon>Muroidea</taxon>
        <taxon>Muridae</taxon>
        <taxon>Murinae</taxon>
        <taxon>Mus</taxon>
        <taxon>Mus</taxon>
    </lineage>
</organism>
<accession>Q7TNI7</accession>
<accession>Q8K4C3</accession>
<proteinExistence type="evidence at protein level"/>
<evidence type="ECO:0000250" key="1"/>
<evidence type="ECO:0000250" key="2">
    <source>
        <dbReference type="UniProtKB" id="Q96PD4"/>
    </source>
</evidence>
<evidence type="ECO:0000255" key="3"/>
<evidence type="ECO:0000269" key="4">
    <source>
    </source>
</evidence>
<evidence type="ECO:0000269" key="5">
    <source>
    </source>
</evidence>
<evidence type="ECO:0000269" key="6">
    <source>
    </source>
</evidence>
<evidence type="ECO:0000269" key="7">
    <source>
    </source>
</evidence>
<evidence type="ECO:0000269" key="8">
    <source>
    </source>
</evidence>
<evidence type="ECO:0000269" key="9">
    <source>
    </source>
</evidence>
<evidence type="ECO:0000269" key="10">
    <source>
    </source>
</evidence>
<evidence type="ECO:0000269" key="11">
    <source>
    </source>
</evidence>
<evidence type="ECO:0000269" key="12">
    <source>
    </source>
</evidence>
<evidence type="ECO:0000303" key="13">
    <source ref="3"/>
</evidence>
<evidence type="ECO:0000305" key="14"/>
<comment type="function">
    <text evidence="2 4 6 7 8 9 10 11 12">Effector cytokine of innate and adaptive immune system involved in antimicrobial host defense and maintenance of tissue integrity (PubMed:18025225, PubMed:19144317, PubMed:23255360). IL17A-IL17F signals via IL17RA-IL17RC heterodimeric receptor complex, triggering homotypic interaction of IL17RA and IL17RC chains with TRAF3IP2 adapter through SEFIR domains. This leads to downstream TRAF6-mediated activation of NF-kappa-B and MAPkinase pathways ultimately resulting in transcriptional activation of cytokines, chemokines, antimicrobial peptides and matrix metalloproteinases, with potential strong immune inflammation (PubMed:15477493, PubMed:17911633, PubMed:18025225). IL17A-IL17F is primarily involved in host defense against extracellular bacteria and fungi by inducing neutrophilic inflammation (PubMed:18025225, PubMed:23255360). As signature effector cytokine of T-helper 17 cells (Th17), primarily induces neutrophil activation and recruitment at infection and inflammatory sites (PubMed:18025225). Stimulates the production of antimicrobial beta-defensins DEFB1, DEFB103A, and DEFB104A by mucosal epithelial cells, limiting the entry of microbes through the epithelial barriers (PubMed:19144317). IL17F homodimer can signal via IL17RC homodimeric receptor complex, triggering downstream activation of TRAF6 and NF-kappa-B signaling pathway (PubMed:28813677). Via IL17RC induces transcriptional activation of IL33, a potent cytokine that stimulates group 2 innate lymphoid cells and adaptive T-helper 2 cells involved in pulmonary allergic response to fungi (PubMed:28813677). Likely via IL17RC, promotes sympathetic innervation of peripheral organs by coordinating the communication between gamma-delta T cells and parenchymal cells. Stimulates sympathetic innervation of thermogenic adipose tissue by driving TGFB1 expression (PubMed:32076265). Regulates the composition of intestinal microbiota and immune tolerance by inducing antimicrobial proteins that specifically control the growth of commensal Firmicutes and Bacteroidetes (PubMed:29915298).</text>
</comment>
<comment type="subunit">
    <text evidence="2 7">Homodimer; disulfide-linked (By similarity). Heterodimer with IL17A (IL17A-IL17F) (PubMed:18025225). Forms complexes with IL17RA and IL17RC receptors with 2:1 binding stoichiometry: two receptor chains for one interleukin molecule (By similarity). IL17F homodimer forms predominantly complexes with IL17RC homodimer, whereas IL17A-IL17F favors complexes with IL17RA-IL17RC (By similarity). IL17RA and IL17RC chains cannot distinguish between IL17A and IL17F molecules, potentially enabling the formation of topologically distinct complexes (By similarity).</text>
</comment>
<comment type="subcellular location">
    <subcellularLocation>
        <location evidence="7">Secreted</location>
    </subcellularLocation>
</comment>
<comment type="alternative products">
    <event type="alternative splicing"/>
    <isoform>
        <id>Q7TNI7-1</id>
        <name>1</name>
        <sequence type="displayed"/>
    </isoform>
    <isoform>
        <id>Q7TNI7-2</id>
        <name>2</name>
        <sequence type="described" ref="VSP_037499"/>
    </isoform>
</comment>
<comment type="tissue specificity">
    <text evidence="5 7 8 9 11">Expressed by T-helper 17 cells (Th17) (at protein level). The expression pattern reflects the differentiation state. In fully differentiated Th17 cells, IL17A-IL17F heterodimers are produced at higher levels than IL17A-IL17A and IL17F-IL17F dimers (PubMed:18025225). Dominantly secreted in intestine (PubMed:29915298). Expressed by resident cells of the lamina propria, both epithelial cells and immune cell subsets including natural killer cells, dendritic cells, macrophages and various T and B cell subsets (PubMed:16990136, PubMed:29915298). Expressed by epithelial cells and innate immune cells in the colon (PubMed:19144317). Expressed in group 3 innate lymphoid cells (PubMed:23255360, PubMed:29915298).</text>
</comment>
<comment type="induction">
    <text evidence="5 7 9 10 12">Induced upon antigen receptor binding in the presence of IL6 and TGB1 (PubMed:16990136, PubMed:18025225). Up-regulated by IL23A-IL12B, IL1B and TNF and inhibited by IFNG and IL4 in CD4-positive T cells (PubMed:18025225). Induced upon fungal infection in innate lymphoid cells (PubMed:23255360). Induced in lung epithelial cells upon bacterial and fungal infection (PubMed:28813677). Induced in brown adipose tissue upon cold exposure (PubMed:32076265).</text>
</comment>
<comment type="disruption phenotype">
    <text evidence="8 10 11">Mutant mice are born healthy at the expected Mendelian ratio, are fertile, and have no apparent phenotypic abnormalities (PubMed:19144317). They show increased susceptibility to S.aureus upper respiratory infection (PubMed:28813677). Mutant mice are protected from chemically induced colitis, a model of human inflammatory bowel disease (PubMed:29915298).</text>
</comment>
<comment type="similarity">
    <text evidence="14">Belongs to the IL-17 family.</text>
</comment>
<dbReference type="EMBL" id="AY380822">
    <property type="protein sequence ID" value="AAQ88439.1"/>
    <property type="molecule type" value="mRNA"/>
</dbReference>
<dbReference type="EMBL" id="AB116259">
    <property type="protein sequence ID" value="BAC81535.1"/>
    <property type="molecule type" value="mRNA"/>
</dbReference>
<dbReference type="EMBL" id="AF458064">
    <property type="protein sequence ID" value="AAM77568.1"/>
    <property type="molecule type" value="mRNA"/>
</dbReference>
<dbReference type="CCDS" id="CCDS35522.1">
    <molecule id="Q7TNI7-1"/>
</dbReference>
<dbReference type="RefSeq" id="NP_665855.2">
    <molecule id="Q7TNI7-1"/>
    <property type="nucleotide sequence ID" value="NM_145856.2"/>
</dbReference>
<dbReference type="RefSeq" id="XP_006495586.1">
    <molecule id="Q7TNI7-1"/>
    <property type="nucleotide sequence ID" value="XM_006495523.2"/>
</dbReference>
<dbReference type="SMR" id="Q7TNI7"/>
<dbReference type="FunCoup" id="Q7TNI7">
    <property type="interactions" value="719"/>
</dbReference>
<dbReference type="IntAct" id="Q7TNI7">
    <property type="interactions" value="2"/>
</dbReference>
<dbReference type="STRING" id="10090.ENSMUSP00000046960"/>
<dbReference type="GlyCosmos" id="Q7TNI7">
    <property type="glycosylation" value="1 site, No reported glycans"/>
</dbReference>
<dbReference type="GlyGen" id="Q7TNI7">
    <property type="glycosylation" value="1 site"/>
</dbReference>
<dbReference type="PhosphoSitePlus" id="Q7TNI7"/>
<dbReference type="PaxDb" id="10090-ENSMUSP00000046960"/>
<dbReference type="Antibodypedia" id="30885">
    <property type="antibodies" value="919 antibodies from 42 providers"/>
</dbReference>
<dbReference type="DNASU" id="257630"/>
<dbReference type="Ensembl" id="ENSMUST00000039046.10">
    <molecule id="Q7TNI7-1"/>
    <property type="protein sequence ID" value="ENSMUSP00000046960.4"/>
    <property type="gene ID" value="ENSMUSG00000041872.10"/>
</dbReference>
<dbReference type="GeneID" id="257630"/>
<dbReference type="KEGG" id="mmu:257630"/>
<dbReference type="UCSC" id="uc007akz.2">
    <molecule id="Q7TNI7-1"/>
    <property type="organism name" value="mouse"/>
</dbReference>
<dbReference type="AGR" id="MGI:2676631"/>
<dbReference type="CTD" id="112744"/>
<dbReference type="MGI" id="MGI:2676631">
    <property type="gene designation" value="Il17f"/>
</dbReference>
<dbReference type="VEuPathDB" id="HostDB:ENSMUSG00000041872"/>
<dbReference type="eggNOG" id="ENOG502S5A0">
    <property type="taxonomic scope" value="Eukaryota"/>
</dbReference>
<dbReference type="GeneTree" id="ENSGT00940000156618"/>
<dbReference type="InParanoid" id="Q7TNI7"/>
<dbReference type="OMA" id="SPWDYNV"/>
<dbReference type="OrthoDB" id="6093351at2759"/>
<dbReference type="PhylomeDB" id="Q7TNI7"/>
<dbReference type="TreeFam" id="TF314701"/>
<dbReference type="BioGRID-ORCS" id="257630">
    <property type="hits" value="0 hits in 77 CRISPR screens"/>
</dbReference>
<dbReference type="PRO" id="PR:Q7TNI7"/>
<dbReference type="Proteomes" id="UP000000589">
    <property type="component" value="Chromosome 1"/>
</dbReference>
<dbReference type="RNAct" id="Q7TNI7">
    <property type="molecule type" value="protein"/>
</dbReference>
<dbReference type="Bgee" id="ENSMUSG00000041872">
    <property type="expression patterns" value="Expressed in animal zygote and 35 other cell types or tissues"/>
</dbReference>
<dbReference type="ExpressionAtlas" id="Q7TNI7">
    <property type="expression patterns" value="baseline and differential"/>
</dbReference>
<dbReference type="GO" id="GO:0005615">
    <property type="term" value="C:extracellular space"/>
    <property type="evidence" value="ECO:0000314"/>
    <property type="project" value="UniProtKB"/>
</dbReference>
<dbReference type="GO" id="GO:0005125">
    <property type="term" value="F:cytokine activity"/>
    <property type="evidence" value="ECO:0007669"/>
    <property type="project" value="UniProtKB-KW"/>
</dbReference>
<dbReference type="GO" id="GO:0019955">
    <property type="term" value="F:cytokine binding"/>
    <property type="evidence" value="ECO:0007669"/>
    <property type="project" value="Ensembl"/>
</dbReference>
<dbReference type="GO" id="GO:0005126">
    <property type="term" value="F:cytokine receptor binding"/>
    <property type="evidence" value="ECO:0000353"/>
    <property type="project" value="MGI"/>
</dbReference>
<dbReference type="GO" id="GO:0046982">
    <property type="term" value="F:protein heterodimerization activity"/>
    <property type="evidence" value="ECO:0000314"/>
    <property type="project" value="UniProtKB"/>
</dbReference>
<dbReference type="GO" id="GO:0042803">
    <property type="term" value="F:protein homodimerization activity"/>
    <property type="evidence" value="ECO:0000314"/>
    <property type="project" value="UniProtKB"/>
</dbReference>
<dbReference type="GO" id="GO:0002250">
    <property type="term" value="P:adaptive immune response"/>
    <property type="evidence" value="ECO:0007669"/>
    <property type="project" value="UniProtKB-KW"/>
</dbReference>
<dbReference type="GO" id="GO:0051216">
    <property type="term" value="P:cartilage development"/>
    <property type="evidence" value="ECO:0007669"/>
    <property type="project" value="Ensembl"/>
</dbReference>
<dbReference type="GO" id="GO:0050829">
    <property type="term" value="P:defense response to Gram-negative bacterium"/>
    <property type="evidence" value="ECO:0000315"/>
    <property type="project" value="UniProtKB"/>
</dbReference>
<dbReference type="GO" id="GO:0050830">
    <property type="term" value="P:defense response to Gram-positive bacterium"/>
    <property type="evidence" value="ECO:0000315"/>
    <property type="project" value="UniProtKB"/>
</dbReference>
<dbReference type="GO" id="GO:0006954">
    <property type="term" value="P:inflammatory response"/>
    <property type="evidence" value="ECO:0007669"/>
    <property type="project" value="UniProtKB-KW"/>
</dbReference>
<dbReference type="GO" id="GO:0045087">
    <property type="term" value="P:innate immune response"/>
    <property type="evidence" value="ECO:0007669"/>
    <property type="project" value="UniProtKB-KW"/>
</dbReference>
<dbReference type="GO" id="GO:0097400">
    <property type="term" value="P:interleukin-17-mediated signaling pathway"/>
    <property type="evidence" value="ECO:0007669"/>
    <property type="project" value="Ensembl"/>
</dbReference>
<dbReference type="GO" id="GO:0016525">
    <property type="term" value="P:negative regulation of angiogenesis"/>
    <property type="evidence" value="ECO:0007669"/>
    <property type="project" value="Ensembl"/>
</dbReference>
<dbReference type="GO" id="GO:0002225">
    <property type="term" value="P:positive regulation of antimicrobial peptide production"/>
    <property type="evidence" value="ECO:0000314"/>
    <property type="project" value="UniProtKB"/>
</dbReference>
<dbReference type="GO" id="GO:2000340">
    <property type="term" value="P:positive regulation of chemokine (C-X-C motif) ligand 1 production"/>
    <property type="evidence" value="ECO:0007669"/>
    <property type="project" value="Ensembl"/>
</dbReference>
<dbReference type="GO" id="GO:1900017">
    <property type="term" value="P:positive regulation of cytokine production involved in inflammatory response"/>
    <property type="evidence" value="ECO:0000314"/>
    <property type="project" value="MGI"/>
</dbReference>
<dbReference type="GO" id="GO:0032755">
    <property type="term" value="P:positive regulation of interleukin-6 production"/>
    <property type="evidence" value="ECO:0000315"/>
    <property type="project" value="UniProtKB"/>
</dbReference>
<dbReference type="GO" id="GO:0032761">
    <property type="term" value="P:positive regulation of lymphotoxin A production"/>
    <property type="evidence" value="ECO:0007669"/>
    <property type="project" value="Ensembl"/>
</dbReference>
<dbReference type="GO" id="GO:0045944">
    <property type="term" value="P:positive regulation of transcription by RNA polymerase II"/>
    <property type="evidence" value="ECO:0000314"/>
    <property type="project" value="MGI"/>
</dbReference>
<dbReference type="GO" id="GO:0032645">
    <property type="term" value="P:regulation of granulocyte macrophage colony-stimulating factor production"/>
    <property type="evidence" value="ECO:0007669"/>
    <property type="project" value="Ensembl"/>
</dbReference>
<dbReference type="GO" id="GO:0032663">
    <property type="term" value="P:regulation of interleukin-2 production"/>
    <property type="evidence" value="ECO:0007669"/>
    <property type="project" value="Ensembl"/>
</dbReference>
<dbReference type="GO" id="GO:0032677">
    <property type="term" value="P:regulation of interleukin-8 production"/>
    <property type="evidence" value="ECO:0007669"/>
    <property type="project" value="Ensembl"/>
</dbReference>
<dbReference type="GO" id="GO:0017015">
    <property type="term" value="P:regulation of transforming growth factor beta receptor signaling pathway"/>
    <property type="evidence" value="ECO:0007669"/>
    <property type="project" value="Ensembl"/>
</dbReference>
<dbReference type="FunFam" id="2.10.90.10:FF:000038">
    <property type="entry name" value="Interleukin-17A"/>
    <property type="match status" value="1"/>
</dbReference>
<dbReference type="Gene3D" id="2.10.90.10">
    <property type="entry name" value="Cystine-knot cytokines"/>
    <property type="match status" value="1"/>
</dbReference>
<dbReference type="InterPro" id="IPR029034">
    <property type="entry name" value="Cystine-knot_cytokine"/>
</dbReference>
<dbReference type="InterPro" id="IPR020440">
    <property type="entry name" value="IL-17_chr"/>
</dbReference>
<dbReference type="InterPro" id="IPR010345">
    <property type="entry name" value="IL-17_fam"/>
</dbReference>
<dbReference type="Pfam" id="PF06083">
    <property type="entry name" value="IL17"/>
    <property type="match status" value="1"/>
</dbReference>
<dbReference type="PRINTS" id="PR01932">
    <property type="entry name" value="INTRLEUKIN17"/>
</dbReference>
<dbReference type="SUPFAM" id="SSF57501">
    <property type="entry name" value="Cystine-knot cytokines"/>
    <property type="match status" value="1"/>
</dbReference>
<sequence>MKCTRETAMVKSLLLLMLGLAILREVAARKNPKAGVPALQKAGNCPPLEDNTVRVDIRIFNQNQGISVPREFQNRSSSPWDYNITRDPHRFPSEIAEAQCRHSGCINAQGQEDSTMNSVAIQQEILVLRREPQGCSNSFRLEKMLLKVGCTCVKPIVHQAA</sequence>
<feature type="signal peptide" evidence="3">
    <location>
        <begin position="1"/>
        <end position="28"/>
    </location>
</feature>
<feature type="chain" id="PRO_0000378104" description="Interleukin-17F" evidence="3">
    <location>
        <begin position="29"/>
        <end position="161"/>
    </location>
</feature>
<feature type="glycosylation site" description="N-linked (GlcNAc...) asparagine" evidence="1">
    <location>
        <position position="83"/>
    </location>
</feature>
<feature type="disulfide bond" description="Interchain (with C-135)" evidence="2">
    <location>
        <position position="45"/>
    </location>
</feature>
<feature type="disulfide bond" evidence="2">
    <location>
        <begin position="100"/>
        <end position="150"/>
    </location>
</feature>
<feature type="disulfide bond" evidence="2">
    <location>
        <begin position="105"/>
        <end position="152"/>
    </location>
</feature>
<feature type="disulfide bond" description="Interchain (with C-45)" evidence="2">
    <location>
        <position position="135"/>
    </location>
</feature>
<feature type="splice variant" id="VSP_037499" description="In isoform 2." evidence="13">
    <location>
        <begin position="1"/>
        <end position="8"/>
    </location>
</feature>